<name>RIMP_RALPJ</name>
<reference key="1">
    <citation type="submission" date="2008-05" db="EMBL/GenBank/DDBJ databases">
        <title>Complete sequence of chromosome 1 of Ralstonia pickettii 12J.</title>
        <authorList>
            <person name="Lucas S."/>
            <person name="Copeland A."/>
            <person name="Lapidus A."/>
            <person name="Glavina del Rio T."/>
            <person name="Dalin E."/>
            <person name="Tice H."/>
            <person name="Bruce D."/>
            <person name="Goodwin L."/>
            <person name="Pitluck S."/>
            <person name="Meincke L."/>
            <person name="Brettin T."/>
            <person name="Detter J.C."/>
            <person name="Han C."/>
            <person name="Kuske C.R."/>
            <person name="Schmutz J."/>
            <person name="Larimer F."/>
            <person name="Land M."/>
            <person name="Hauser L."/>
            <person name="Kyrpides N."/>
            <person name="Mikhailova N."/>
            <person name="Marsh T."/>
            <person name="Richardson P."/>
        </authorList>
    </citation>
    <scope>NUCLEOTIDE SEQUENCE [LARGE SCALE GENOMIC DNA]</scope>
    <source>
        <strain>12J</strain>
    </source>
</reference>
<sequence>MHLTDLIEKTLTAMGYELVEVERAPAGLLRVYIDQAENGVVIEDCEKVSHQLTRVFEVENVNYERLEVSSPGLDRPLRTLADFTRFAGLEAKVTLRLPVDGQKNFTGIIQAPTGEPGQERIGLEFEGKEGPALLGFTLSELDRARLVPVLDFKGNRNKGNKQ</sequence>
<accession>B2UAA1</accession>
<gene>
    <name evidence="1" type="primary">rimP</name>
    <name type="ordered locus">Rpic_1115</name>
</gene>
<protein>
    <recommendedName>
        <fullName evidence="1">Ribosome maturation factor RimP</fullName>
    </recommendedName>
</protein>
<proteinExistence type="inferred from homology"/>
<keyword id="KW-0963">Cytoplasm</keyword>
<keyword id="KW-0690">Ribosome biogenesis</keyword>
<evidence type="ECO:0000255" key="1">
    <source>
        <dbReference type="HAMAP-Rule" id="MF_01077"/>
    </source>
</evidence>
<comment type="function">
    <text evidence="1">Required for maturation of 30S ribosomal subunits.</text>
</comment>
<comment type="subcellular location">
    <subcellularLocation>
        <location evidence="1">Cytoplasm</location>
    </subcellularLocation>
</comment>
<comment type="similarity">
    <text evidence="1">Belongs to the RimP family.</text>
</comment>
<dbReference type="EMBL" id="CP001068">
    <property type="protein sequence ID" value="ACD26263.1"/>
    <property type="molecule type" value="Genomic_DNA"/>
</dbReference>
<dbReference type="SMR" id="B2UAA1"/>
<dbReference type="STRING" id="402626.Rpic_1115"/>
<dbReference type="KEGG" id="rpi:Rpic_1115"/>
<dbReference type="eggNOG" id="COG0779">
    <property type="taxonomic scope" value="Bacteria"/>
</dbReference>
<dbReference type="HOGENOM" id="CLU_070525_1_0_4"/>
<dbReference type="GO" id="GO:0005829">
    <property type="term" value="C:cytosol"/>
    <property type="evidence" value="ECO:0007669"/>
    <property type="project" value="TreeGrafter"/>
</dbReference>
<dbReference type="GO" id="GO:0000028">
    <property type="term" value="P:ribosomal small subunit assembly"/>
    <property type="evidence" value="ECO:0007669"/>
    <property type="project" value="TreeGrafter"/>
</dbReference>
<dbReference type="GO" id="GO:0006412">
    <property type="term" value="P:translation"/>
    <property type="evidence" value="ECO:0007669"/>
    <property type="project" value="TreeGrafter"/>
</dbReference>
<dbReference type="CDD" id="cd01734">
    <property type="entry name" value="YlxS_C"/>
    <property type="match status" value="1"/>
</dbReference>
<dbReference type="Gene3D" id="2.30.30.180">
    <property type="entry name" value="Ribosome maturation factor RimP, C-terminal domain"/>
    <property type="match status" value="1"/>
</dbReference>
<dbReference type="Gene3D" id="3.30.300.70">
    <property type="entry name" value="RimP-like superfamily, N-terminal"/>
    <property type="match status" value="1"/>
</dbReference>
<dbReference type="HAMAP" id="MF_01077">
    <property type="entry name" value="RimP"/>
    <property type="match status" value="1"/>
</dbReference>
<dbReference type="InterPro" id="IPR003728">
    <property type="entry name" value="Ribosome_maturation_RimP"/>
</dbReference>
<dbReference type="InterPro" id="IPR028998">
    <property type="entry name" value="RimP_C"/>
</dbReference>
<dbReference type="InterPro" id="IPR036847">
    <property type="entry name" value="RimP_C_sf"/>
</dbReference>
<dbReference type="InterPro" id="IPR028989">
    <property type="entry name" value="RimP_N"/>
</dbReference>
<dbReference type="InterPro" id="IPR035956">
    <property type="entry name" value="RimP_N_sf"/>
</dbReference>
<dbReference type="NCBIfam" id="NF000929">
    <property type="entry name" value="PRK00092.2-1"/>
    <property type="match status" value="1"/>
</dbReference>
<dbReference type="PANTHER" id="PTHR33867">
    <property type="entry name" value="RIBOSOME MATURATION FACTOR RIMP"/>
    <property type="match status" value="1"/>
</dbReference>
<dbReference type="PANTHER" id="PTHR33867:SF1">
    <property type="entry name" value="RIBOSOME MATURATION FACTOR RIMP"/>
    <property type="match status" value="1"/>
</dbReference>
<dbReference type="Pfam" id="PF17384">
    <property type="entry name" value="DUF150_C"/>
    <property type="match status" value="1"/>
</dbReference>
<dbReference type="Pfam" id="PF02576">
    <property type="entry name" value="RimP_N"/>
    <property type="match status" value="1"/>
</dbReference>
<dbReference type="SUPFAM" id="SSF74942">
    <property type="entry name" value="YhbC-like, C-terminal domain"/>
    <property type="match status" value="1"/>
</dbReference>
<dbReference type="SUPFAM" id="SSF75420">
    <property type="entry name" value="YhbC-like, N-terminal domain"/>
    <property type="match status" value="1"/>
</dbReference>
<feature type="chain" id="PRO_1000136790" description="Ribosome maturation factor RimP">
    <location>
        <begin position="1"/>
        <end position="162"/>
    </location>
</feature>
<organism>
    <name type="scientific">Ralstonia pickettii (strain 12J)</name>
    <dbReference type="NCBI Taxonomy" id="402626"/>
    <lineage>
        <taxon>Bacteria</taxon>
        <taxon>Pseudomonadati</taxon>
        <taxon>Pseudomonadota</taxon>
        <taxon>Betaproteobacteria</taxon>
        <taxon>Burkholderiales</taxon>
        <taxon>Burkholderiaceae</taxon>
        <taxon>Ralstonia</taxon>
    </lineage>
</organism>